<accession>Q0HYB4</accession>
<feature type="chain" id="PRO_0000292972" description="Sulfite reductase [NADPH] flavoprotein alpha-component">
    <location>
        <begin position="1"/>
        <end position="604"/>
    </location>
</feature>
<feature type="domain" description="Flavodoxin-like" evidence="1">
    <location>
        <begin position="65"/>
        <end position="203"/>
    </location>
</feature>
<feature type="domain" description="FAD-binding FR-type" evidence="1">
    <location>
        <begin position="236"/>
        <end position="453"/>
    </location>
</feature>
<feature type="binding site" evidence="1">
    <location>
        <begin position="71"/>
        <end position="76"/>
    </location>
    <ligand>
        <name>FMN</name>
        <dbReference type="ChEBI" id="CHEBI:58210"/>
    </ligand>
</feature>
<feature type="binding site" evidence="1">
    <location>
        <begin position="118"/>
        <end position="121"/>
    </location>
    <ligand>
        <name>FMN</name>
        <dbReference type="ChEBI" id="CHEBI:58210"/>
    </ligand>
</feature>
<feature type="binding site" evidence="1">
    <location>
        <begin position="154"/>
        <end position="163"/>
    </location>
    <ligand>
        <name>FMN</name>
        <dbReference type="ChEBI" id="CHEBI:58210"/>
    </ligand>
</feature>
<feature type="binding site" evidence="1">
    <location>
        <position position="324"/>
    </location>
    <ligand>
        <name>FAD</name>
        <dbReference type="ChEBI" id="CHEBI:57692"/>
    </ligand>
</feature>
<feature type="binding site" evidence="1">
    <location>
        <position position="358"/>
    </location>
    <ligand>
        <name>FAD</name>
        <dbReference type="ChEBI" id="CHEBI:57692"/>
    </ligand>
</feature>
<feature type="binding site" evidence="1">
    <location>
        <begin position="392"/>
        <end position="395"/>
    </location>
    <ligand>
        <name>FAD</name>
        <dbReference type="ChEBI" id="CHEBI:57692"/>
    </ligand>
</feature>
<feature type="binding site" evidence="1">
    <location>
        <begin position="410"/>
        <end position="412"/>
    </location>
    <ligand>
        <name>FAD</name>
        <dbReference type="ChEBI" id="CHEBI:57692"/>
    </ligand>
</feature>
<feature type="binding site" evidence="1">
    <location>
        <begin position="425"/>
        <end position="428"/>
    </location>
    <ligand>
        <name>FAD</name>
        <dbReference type="ChEBI" id="CHEBI:57692"/>
    </ligand>
</feature>
<feature type="binding site" evidence="1">
    <location>
        <begin position="524"/>
        <end position="525"/>
    </location>
    <ligand>
        <name>NADP(+)</name>
        <dbReference type="ChEBI" id="CHEBI:58349"/>
    </ligand>
</feature>
<feature type="binding site" evidence="1">
    <location>
        <begin position="530"/>
        <end position="534"/>
    </location>
    <ligand>
        <name>NADP(+)</name>
        <dbReference type="ChEBI" id="CHEBI:58349"/>
    </ligand>
</feature>
<feature type="binding site" evidence="1">
    <location>
        <position position="566"/>
    </location>
    <ligand>
        <name>NADP(+)</name>
        <dbReference type="ChEBI" id="CHEBI:58349"/>
    </ligand>
</feature>
<feature type="binding site" evidence="1">
    <location>
        <position position="604"/>
    </location>
    <ligand>
        <name>FAD</name>
        <dbReference type="ChEBI" id="CHEBI:57692"/>
    </ligand>
</feature>
<gene>
    <name evidence="1" type="primary">cysJ</name>
    <name type="ordered locus">Shewmr7_0892</name>
</gene>
<comment type="function">
    <text evidence="1">Component of the sulfite reductase complex that catalyzes the 6-electron reduction of sulfite to sulfide. This is one of several activities required for the biosynthesis of L-cysteine from sulfate. The flavoprotein component catalyzes the electron flow from NADPH -&gt; FAD -&gt; FMN to the hemoprotein component.</text>
</comment>
<comment type="catalytic activity">
    <reaction evidence="1">
        <text>hydrogen sulfide + 3 NADP(+) + 3 H2O = sulfite + 3 NADPH + 4 H(+)</text>
        <dbReference type="Rhea" id="RHEA:13801"/>
        <dbReference type="ChEBI" id="CHEBI:15377"/>
        <dbReference type="ChEBI" id="CHEBI:15378"/>
        <dbReference type="ChEBI" id="CHEBI:17359"/>
        <dbReference type="ChEBI" id="CHEBI:29919"/>
        <dbReference type="ChEBI" id="CHEBI:57783"/>
        <dbReference type="ChEBI" id="CHEBI:58349"/>
        <dbReference type="EC" id="1.8.1.2"/>
    </reaction>
</comment>
<comment type="cofactor">
    <cofactor evidence="1">
        <name>FAD</name>
        <dbReference type="ChEBI" id="CHEBI:57692"/>
    </cofactor>
    <text evidence="1">Binds 1 FAD per subunit.</text>
</comment>
<comment type="cofactor">
    <cofactor evidence="1">
        <name>FMN</name>
        <dbReference type="ChEBI" id="CHEBI:58210"/>
    </cofactor>
    <text evidence="1">Binds 1 FMN per subunit.</text>
</comment>
<comment type="pathway">
    <text evidence="1">Sulfur metabolism; hydrogen sulfide biosynthesis; hydrogen sulfide from sulfite (NADPH route): step 1/1.</text>
</comment>
<comment type="subunit">
    <text evidence="1">Alpha(8)-beta(8). The alpha component is a flavoprotein, the beta component is a hemoprotein.</text>
</comment>
<comment type="similarity">
    <text evidence="1">Belongs to the NADPH-dependent sulphite reductase flavoprotein subunit CysJ family.</text>
</comment>
<comment type="similarity">
    <text evidence="1">In the N-terminal section; belongs to the flavodoxin family.</text>
</comment>
<comment type="similarity">
    <text evidence="1">In the C-terminal section; belongs to the flavoprotein pyridine nucleotide cytochrome reductase family.</text>
</comment>
<reference key="1">
    <citation type="submission" date="2006-08" db="EMBL/GenBank/DDBJ databases">
        <title>Complete sequence of chromosome 1 of Shewanella sp. MR-7.</title>
        <authorList>
            <person name="Copeland A."/>
            <person name="Lucas S."/>
            <person name="Lapidus A."/>
            <person name="Barry K."/>
            <person name="Detter J.C."/>
            <person name="Glavina del Rio T."/>
            <person name="Hammon N."/>
            <person name="Israni S."/>
            <person name="Dalin E."/>
            <person name="Tice H."/>
            <person name="Pitluck S."/>
            <person name="Kiss H."/>
            <person name="Brettin T."/>
            <person name="Bruce D."/>
            <person name="Han C."/>
            <person name="Tapia R."/>
            <person name="Gilna P."/>
            <person name="Schmutz J."/>
            <person name="Larimer F."/>
            <person name="Land M."/>
            <person name="Hauser L."/>
            <person name="Kyrpides N."/>
            <person name="Mikhailova N."/>
            <person name="Nealson K."/>
            <person name="Konstantinidis K."/>
            <person name="Klappenbach J."/>
            <person name="Tiedje J."/>
            <person name="Richardson P."/>
        </authorList>
    </citation>
    <scope>NUCLEOTIDE SEQUENCE [LARGE SCALE GENOMIC DNA]</scope>
    <source>
        <strain>MR-7</strain>
    </source>
</reference>
<name>CYSJ_SHESR</name>
<proteinExistence type="inferred from homology"/>
<evidence type="ECO:0000255" key="1">
    <source>
        <dbReference type="HAMAP-Rule" id="MF_01541"/>
    </source>
</evidence>
<keyword id="KW-0028">Amino-acid biosynthesis</keyword>
<keyword id="KW-0198">Cysteine biosynthesis</keyword>
<keyword id="KW-0249">Electron transport</keyword>
<keyword id="KW-0274">FAD</keyword>
<keyword id="KW-0285">Flavoprotein</keyword>
<keyword id="KW-0288">FMN</keyword>
<keyword id="KW-0521">NADP</keyword>
<keyword id="KW-0560">Oxidoreductase</keyword>
<keyword id="KW-0813">Transport</keyword>
<organism>
    <name type="scientific">Shewanella sp. (strain MR-7)</name>
    <dbReference type="NCBI Taxonomy" id="60481"/>
    <lineage>
        <taxon>Bacteria</taxon>
        <taxon>Pseudomonadati</taxon>
        <taxon>Pseudomonadota</taxon>
        <taxon>Gammaproteobacteria</taxon>
        <taxon>Alteromonadales</taxon>
        <taxon>Shewanellaceae</taxon>
        <taxon>Shewanella</taxon>
    </lineage>
</organism>
<sequence>MLLKELSSLASPLSQPQVEKLKQLTAELNAVQLAWVSGYLAATANAPGNLAQLAPVSDAQAAQTVTILYGSQTGNGRGIAKALAEKAKAQGYSVNLASMGEYNVRQLKQETLLLLVVSTHGEGEAPDDAIELHKFLASKRAPQLSNLHYSVLALGDSSYEFFCQTGKDFDARLSALGAKALLPLVECDVDYEAAAGQWHADVLTAVKPLIQTTANVVALNDTSSALAASESEFTKQNPYSAEVLVSQKITGRGSDRDVRHVEIDLGESGLCYEVGDALGVWFSNNETLVDEILAGLGLAADTKVTVGNESISLKQALLEKKELTQLYPGLVKAWAELSASPELLALSGDKEQVRQFILHHQFADLVANYQLKADANLDANKLVELLRPLTPRLYSIASSQSEVDTEVHLTVALVEDEHQGQARFGGASHFLASAEEGAEVKVYVEPNKHFRLPEDPQTPVIMIGPGTGVAPFRAFMQERVAQGAEGDSWLFFGNPHFEQDFLYQTEWQQYLKNGDLTRIDVAFSRDQAHKIYVQHRIKEQGQTLWQWLQNGAHLYICGDAERMAKDVHQALLAIAVEFGGLSSEAAEEYFETLRSHKRYQKDVY</sequence>
<protein>
    <recommendedName>
        <fullName evidence="1">Sulfite reductase [NADPH] flavoprotein alpha-component</fullName>
        <shortName evidence="1">SiR-FP</shortName>
        <ecNumber evidence="1">1.8.1.2</ecNumber>
    </recommendedName>
</protein>
<dbReference type="EC" id="1.8.1.2" evidence="1"/>
<dbReference type="EMBL" id="CP000444">
    <property type="protein sequence ID" value="ABI41891.1"/>
    <property type="molecule type" value="Genomic_DNA"/>
</dbReference>
<dbReference type="SMR" id="Q0HYB4"/>
<dbReference type="KEGG" id="shm:Shewmr7_0892"/>
<dbReference type="HOGENOM" id="CLU_001570_17_7_6"/>
<dbReference type="UniPathway" id="UPA00140">
    <property type="reaction ID" value="UER00207"/>
</dbReference>
<dbReference type="GO" id="GO:0005829">
    <property type="term" value="C:cytosol"/>
    <property type="evidence" value="ECO:0007669"/>
    <property type="project" value="TreeGrafter"/>
</dbReference>
<dbReference type="GO" id="GO:0050660">
    <property type="term" value="F:flavin adenine dinucleotide binding"/>
    <property type="evidence" value="ECO:0007669"/>
    <property type="project" value="InterPro"/>
</dbReference>
<dbReference type="GO" id="GO:0010181">
    <property type="term" value="F:FMN binding"/>
    <property type="evidence" value="ECO:0007669"/>
    <property type="project" value="InterPro"/>
</dbReference>
<dbReference type="GO" id="GO:0004783">
    <property type="term" value="F:sulfite reductase (NADPH) activity"/>
    <property type="evidence" value="ECO:0007669"/>
    <property type="project" value="UniProtKB-UniRule"/>
</dbReference>
<dbReference type="GO" id="GO:0019344">
    <property type="term" value="P:cysteine biosynthetic process"/>
    <property type="evidence" value="ECO:0007669"/>
    <property type="project" value="UniProtKB-KW"/>
</dbReference>
<dbReference type="GO" id="GO:0070814">
    <property type="term" value="P:hydrogen sulfide biosynthetic process"/>
    <property type="evidence" value="ECO:0007669"/>
    <property type="project" value="UniProtKB-UniRule"/>
</dbReference>
<dbReference type="GO" id="GO:0000103">
    <property type="term" value="P:sulfate assimilation"/>
    <property type="evidence" value="ECO:0007669"/>
    <property type="project" value="UniProtKB-UniRule"/>
</dbReference>
<dbReference type="CDD" id="cd06199">
    <property type="entry name" value="SiR"/>
    <property type="match status" value="1"/>
</dbReference>
<dbReference type="FunFam" id="3.40.50.80:FF:000001">
    <property type="entry name" value="NADPH--cytochrome P450 reductase 1"/>
    <property type="match status" value="1"/>
</dbReference>
<dbReference type="FunFam" id="3.40.50.360:FF:000018">
    <property type="entry name" value="Sulfite reductase [NADPH] flavoprotein alpha-component"/>
    <property type="match status" value="1"/>
</dbReference>
<dbReference type="Gene3D" id="3.40.50.360">
    <property type="match status" value="1"/>
</dbReference>
<dbReference type="Gene3D" id="1.20.990.10">
    <property type="entry name" value="NADPH-cytochrome p450 Reductase, Chain A, domain 3"/>
    <property type="match status" value="1"/>
</dbReference>
<dbReference type="Gene3D" id="3.40.50.80">
    <property type="entry name" value="Nucleotide-binding domain of ferredoxin-NADP reductase (FNR) module"/>
    <property type="match status" value="1"/>
</dbReference>
<dbReference type="Gene3D" id="2.40.30.10">
    <property type="entry name" value="Translation factors"/>
    <property type="match status" value="1"/>
</dbReference>
<dbReference type="HAMAP" id="MF_01541">
    <property type="entry name" value="CysJ"/>
    <property type="match status" value="1"/>
</dbReference>
<dbReference type="InterPro" id="IPR010199">
    <property type="entry name" value="CysJ"/>
</dbReference>
<dbReference type="InterPro" id="IPR003097">
    <property type="entry name" value="CysJ-like_FAD-binding"/>
</dbReference>
<dbReference type="InterPro" id="IPR029758">
    <property type="entry name" value="CysJ_Proteobact"/>
</dbReference>
<dbReference type="InterPro" id="IPR017927">
    <property type="entry name" value="FAD-bd_FR_type"/>
</dbReference>
<dbReference type="InterPro" id="IPR001094">
    <property type="entry name" value="Flavdoxin-like"/>
</dbReference>
<dbReference type="InterPro" id="IPR008254">
    <property type="entry name" value="Flavodoxin/NO_synth"/>
</dbReference>
<dbReference type="InterPro" id="IPR001709">
    <property type="entry name" value="Flavoprot_Pyr_Nucl_cyt_Rdtase"/>
</dbReference>
<dbReference type="InterPro" id="IPR029039">
    <property type="entry name" value="Flavoprotein-like_sf"/>
</dbReference>
<dbReference type="InterPro" id="IPR039261">
    <property type="entry name" value="FNR_nucleotide-bd"/>
</dbReference>
<dbReference type="InterPro" id="IPR023173">
    <property type="entry name" value="NADPH_Cyt_P450_Rdtase_alpha"/>
</dbReference>
<dbReference type="InterPro" id="IPR001433">
    <property type="entry name" value="OxRdtase_FAD/NAD-bd"/>
</dbReference>
<dbReference type="InterPro" id="IPR017938">
    <property type="entry name" value="Riboflavin_synthase-like_b-brl"/>
</dbReference>
<dbReference type="NCBIfam" id="TIGR01931">
    <property type="entry name" value="cysJ"/>
    <property type="match status" value="1"/>
</dbReference>
<dbReference type="PANTHER" id="PTHR19384:SF128">
    <property type="entry name" value="NADPH OXIDOREDUCTASE A"/>
    <property type="match status" value="1"/>
</dbReference>
<dbReference type="PANTHER" id="PTHR19384">
    <property type="entry name" value="NITRIC OXIDE SYNTHASE-RELATED"/>
    <property type="match status" value="1"/>
</dbReference>
<dbReference type="Pfam" id="PF00667">
    <property type="entry name" value="FAD_binding_1"/>
    <property type="match status" value="1"/>
</dbReference>
<dbReference type="Pfam" id="PF00258">
    <property type="entry name" value="Flavodoxin_1"/>
    <property type="match status" value="1"/>
</dbReference>
<dbReference type="Pfam" id="PF00175">
    <property type="entry name" value="NAD_binding_1"/>
    <property type="match status" value="1"/>
</dbReference>
<dbReference type="PIRSF" id="PIRSF000207">
    <property type="entry name" value="SiR-FP_CysJ"/>
    <property type="match status" value="1"/>
</dbReference>
<dbReference type="PRINTS" id="PR00369">
    <property type="entry name" value="FLAVODOXIN"/>
</dbReference>
<dbReference type="PRINTS" id="PR00371">
    <property type="entry name" value="FPNCR"/>
</dbReference>
<dbReference type="SUPFAM" id="SSF52343">
    <property type="entry name" value="Ferredoxin reductase-like, C-terminal NADP-linked domain"/>
    <property type="match status" value="1"/>
</dbReference>
<dbReference type="SUPFAM" id="SSF52218">
    <property type="entry name" value="Flavoproteins"/>
    <property type="match status" value="1"/>
</dbReference>
<dbReference type="SUPFAM" id="SSF63380">
    <property type="entry name" value="Riboflavin synthase domain-like"/>
    <property type="match status" value="1"/>
</dbReference>
<dbReference type="PROSITE" id="PS51384">
    <property type="entry name" value="FAD_FR"/>
    <property type="match status" value="1"/>
</dbReference>
<dbReference type="PROSITE" id="PS50902">
    <property type="entry name" value="FLAVODOXIN_LIKE"/>
    <property type="match status" value="1"/>
</dbReference>